<keyword id="KW-0938">Abscisic acid signaling pathway</keyword>
<keyword id="KW-0007">Acetylation</keyword>
<keyword id="KW-0050">Antiport</keyword>
<keyword id="KW-0150">Chloroplast</keyword>
<keyword id="KW-0175">Coiled coil</keyword>
<keyword id="KW-0406">Ion transport</keyword>
<keyword id="KW-0472">Membrane</keyword>
<keyword id="KW-0934">Plastid</keyword>
<keyword id="KW-1001">Plastid inner membrane</keyword>
<keyword id="KW-0630">Potassium</keyword>
<keyword id="KW-0633">Potassium transport</keyword>
<keyword id="KW-1185">Reference proteome</keyword>
<keyword id="KW-0809">Transit peptide</keyword>
<keyword id="KW-0812">Transmembrane</keyword>
<keyword id="KW-1133">Transmembrane helix</keyword>
<keyword id="KW-0813">Transport</keyword>
<comment type="function">
    <text evidence="6 8 9 11 13 14 15 16">Electroneutral K(+)/H(+) efflux antiporter involved in chloroplastic K(+) homeostasis and osmotic adjustment, especially during plastid division and thylakoid membrane formation (PubMed:24278440, PubMed:27443603, PubMed:31296940, PubMed:33111995). Collaboratively with KEA2, adjusts alkaline stromal pH upon light to dark transitions in plastids (PubMed:33111995). Together with KEA2, critical for chloroplast development, including chloroplast RNA-metabolism (e.g. rRNA maturation, polysome loading and RNA-protein interactions) and plastid gene expression (PGE), ion homeostasis, and photosynthesis (PubMed:27443603, PubMed:34235544). Contributes, during early seedling development, to the regulation of photosynthesis and abscisic acid- (ABA-) mediated primary root growth in a sucrose-dependent manner (PubMed:35193734). Involved in the regulation of reactive oxygen and nitrogen species (ROS and RNS) metabolism (PubMed:33485149). Required in roots for rapid hyperosmotic-induced Ca(2+) responses and for osmo-sensory potentiation in hyperosmotic conditions (PubMed:27528686). May counteract resilience to drought and salt stress, involving photorespiratory pathway and stomata closure (PubMed:33485149, PubMed:34235544).</text>
</comment>
<comment type="catalytic activity">
    <reaction evidence="6 11 13">
        <text>K(+)(in) + H(+)(out) = K(+)(out) + H(+)(in)</text>
        <dbReference type="Rhea" id="RHEA:29467"/>
        <dbReference type="ChEBI" id="CHEBI:15378"/>
        <dbReference type="ChEBI" id="CHEBI:29103"/>
    </reaction>
</comment>
<comment type="activity regulation">
    <text evidence="13">Repressed by sodium ions Na(+).</text>
</comment>
<comment type="biophysicochemical properties">
    <phDependence>
        <text evidence="6">Optimum pH is 5.8.</text>
    </phDependence>
</comment>
<comment type="subcellular location">
    <subcellularLocation>
        <location evidence="4 5 7">Plastid</location>
        <location evidence="4 5 7">Chloroplast inner membrane</location>
        <topology evidence="1">Multi-pass membrane protein</topology>
    </subcellularLocation>
    <text evidence="8">Specifically localized to the two caps of the dividing organelle separated by the fission plane (at protein level).</text>
</comment>
<comment type="tissue specificity">
    <text evidence="6 8 16">Expressed in shoots and roots (PubMed:24278440). Mainly localized to leaf veins, hypocotyls, mesophylls and guard cells (PubMed:35193734). Accumulates at high levels in small and dividing plastids (at protein level) (PubMed:27443603).</text>
</comment>
<comment type="induction">
    <text evidence="6">Up-regulated by low K(+) stress and down-regulated by high K(+).</text>
</comment>
<comment type="PTM">
    <text evidence="10 12">Acetylated at Lys-168 by the stromal acetyltransferase enzyme NSI.</text>
</comment>
<comment type="disruption phenotype">
    <text evidence="7 8 9 13 14 15 16">No visible phenotype (PubMed:24794527). Disrupted K(+)/H(+) efflux antiporter in the kea1 kea2 double mutant (PubMed:33111995). Mutants kea1 kea2 display strong growth retardation along with pale green leaves associated with a delayed formation of chloroplast pigments and electron transport complexes, as well as maturation defects of the plastid ribosomal RNAs and hampered RNA-protein interactions (PubMed:24794527, PubMed:27443603, PubMed:34235544). Double mutant kea1 kea2 exhibits a drastic photosystem II (PSII) quantum yield recovery under moderate salt stress (PubMed:34235544). Impaired rapid hyperosmotic-induced Ca(2+) responses in kea1 kea2 (PubMed:27528686). K(+)-induced alkalinization of plastid stroma is suppressed in kea1 kea2 mutants, as well as delayed rate of decay to neutral pH in the dark, but normal light-stimulated alkalinization of the stroma (PubMed:33111995). In addition, reduced primary root length is observed in the kea1 kea2 double mutant in the absence of sucrose, associated with lower abscisic acid (ABA) accumulation and impaired photosynthesis; these phenotypes are partially restored in the presence of moderate NaCl treatment (75 mM) (PubMed:33485149, PubMed:35193734). Plants kea1 kea2 have slightly higher K(+) levels and altered reactive oxygen and nitrogen species (ROS and RNS) metabolism, but enhanced resilience to drought stress due to an increased photorespiratory pathway and stomata closure (PubMed:33485149). Triple mutants kea1 kea2 kea3 are extremely stunted in size with entirely pale leaves and died before steeing seeds (PubMed:24794527).</text>
</comment>
<comment type="miscellaneous">
    <text evidence="6">The full-length protein being inactive in a heterologous system, the N-terminal region seems to have a regulatory or auto-inhibitory function.</text>
</comment>
<comment type="similarity">
    <text evidence="19">Belongs to the monovalent cation:proton antiporter 2 (CPA2) transporter (TC 2.A.37) family. KEA (TC 2.A.37.1) subfamily.</text>
</comment>
<comment type="sequence caution" evidence="19">
    <conflict type="erroneous initiation">
        <sequence resource="EMBL-CDS" id="AAD01191"/>
    </conflict>
    <text>Truncated N-terminus.</text>
</comment>
<comment type="sequence caution" evidence="19">
    <conflict type="erroneous gene model prediction">
        <sequence resource="EMBL-CDS" id="AAF78418"/>
    </conflict>
    <text>Was originally thought to correspond to two different genes.</text>
</comment>
<comment type="sequence caution" evidence="19">
    <conflict type="erroneous gene model prediction">
        <sequence resource="EMBL-CDS" id="AAF78419"/>
    </conflict>
    <text>Was originally thought to correspond to two different genes.</text>
</comment>
<proteinExistence type="evidence at protein level"/>
<accession>Q9ZTZ7</accession>
<accession>Q9LQ76</accession>
<accession>Q9LQ77</accession>
<name>KEA1_ARATH</name>
<sequence length="1193" mass="128033">MEYASTFQRPILFHGGDGASYCFPNRLISPKGISITSGDSKVHSCFRLRRNVAQSGTLNLMNACFSGRFYSGHLHSTKSILGNGHQAKRIPFGFRLRCQGHESLGNADSNDHRIGESSESSDETEATDLKDARVENDTDSLEELKELLHKAIKELEVARLNSTMFEEKAQRISERAIALKDEAATAWLDVNKTLDVIRDTVYEEALAKEAVQTATMALSLAEARLQVIVESLEAGAGNDIPHVSEETEETIDVNDKEEALLAAKDDIKECQVNLDNCESQLSALLSKKDELQKEVDKLNEFAETIQISSLKAEEDVTNIMKLAEQAVAFELEATQRVNDAEIALQRAEKSLSISQTPEETQGQLSDEETSQEDAMVLSGNVEDVTHQVEKESPKDGDLPVVQITAELVPDIVGQRNKKLTQPYESSDHENGKPSVESSKVVEADSEKPKINVQTKKQETQKDLPKEGSSLNSPKASFNKSSRFFSASFFSSNPDGTATVFGSLVGSVKQQWPKLVLGLALLGAGLTLYSNGVGGNNQLLQQPDVTSTSTEDVSSSTKPLIRQVQKLPKRIKKLLEMIPHQEVNEEEASLFDFLWLLLASVIFVPLFQKIPGGSPVLGYLAAGILIGPYGLSIIRNVHGTRAIAEFGVVFLLFNIGLELSVERLSSMKKYVFGLGSAQVLVTAAVVGLLAHYVAGQAGPAAIVIGNGLALSSTAVVLQVLQERGESTSRHGRASFSVLLFQDLAVVVLLILIPLISPNSSKGGIGFQAIAEALGLAAVKAAVAITAIIAGGRLLLRPIYKQIAENRNAEIFSANTLLVILGTSLLTARAGLSMALGAFLAGLLLAETEFSLQVESDIAPYRGLLLGLFFMTVGMSIDPKLLLSNFPVIVGTLGLLIVGKTMLVVIMGKLFGISIISAIRVGLLLAPGGEFAFVAFGEAVNQGIMSPQLSSLLFLVVGISMAITPWLAAGGQLIASRFELHDVRSLLPVESETDDLQGHIIICGFGRVGQIIAQLLSERLIPFVALDVSSDRVTIGRSLDLPVYFGDAGSKEVLHKIGAGRACAAVVALDAPGANYRCVWALSKFYPNVKTFVRAHDVVHGLNLEKAGATAVVPETLEPSLQLAAAVLAQAKLPTSEIANTINEFRTRHLSELTELCEASGSSLGYGYSRTSKPKPQPSDASGDNQIIEGGTVVI</sequence>
<dbReference type="EMBL" id="AF003382">
    <property type="protein sequence ID" value="AAD01191.1"/>
    <property type="status" value="ALT_INIT"/>
    <property type="molecule type" value="mRNA"/>
</dbReference>
<dbReference type="EMBL" id="AC009273">
    <property type="protein sequence ID" value="AAF78418.1"/>
    <property type="status" value="ALT_SEQ"/>
    <property type="molecule type" value="Genomic_DNA"/>
</dbReference>
<dbReference type="EMBL" id="AC009273">
    <property type="protein sequence ID" value="AAF78419.1"/>
    <property type="status" value="ALT_SEQ"/>
    <property type="molecule type" value="Genomic_DNA"/>
</dbReference>
<dbReference type="EMBL" id="CP002684">
    <property type="protein sequence ID" value="AEE27335.1"/>
    <property type="molecule type" value="Genomic_DNA"/>
</dbReference>
<dbReference type="EMBL" id="CP002684">
    <property type="protein sequence ID" value="ANM58176.1"/>
    <property type="molecule type" value="Genomic_DNA"/>
</dbReference>
<dbReference type="PIR" id="E86149">
    <property type="entry name" value="E86149"/>
</dbReference>
<dbReference type="PIR" id="F86149">
    <property type="entry name" value="F86149"/>
</dbReference>
<dbReference type="RefSeq" id="NP_001320631.1">
    <property type="nucleotide sequence ID" value="NM_001331307.1"/>
</dbReference>
<dbReference type="RefSeq" id="NP_171684.2">
    <property type="nucleotide sequence ID" value="NM_100062.5"/>
</dbReference>
<dbReference type="SMR" id="Q9ZTZ7"/>
<dbReference type="BioGRID" id="22573">
    <property type="interactions" value="6"/>
</dbReference>
<dbReference type="FunCoup" id="Q9ZTZ7">
    <property type="interactions" value="1279"/>
</dbReference>
<dbReference type="IntAct" id="Q9ZTZ7">
    <property type="interactions" value="6"/>
</dbReference>
<dbReference type="STRING" id="3702.Q9ZTZ7"/>
<dbReference type="TCDB" id="2.A.37.1.4">
    <property type="family name" value="the monovalent cation:proton antiporter-2 (cpa2) family"/>
</dbReference>
<dbReference type="iPTMnet" id="Q9ZTZ7"/>
<dbReference type="PaxDb" id="3702-AT1G01790.1"/>
<dbReference type="ProteomicsDB" id="250758"/>
<dbReference type="EnsemblPlants" id="AT1G01790.1">
    <property type="protein sequence ID" value="AT1G01790.1"/>
    <property type="gene ID" value="AT1G01790"/>
</dbReference>
<dbReference type="EnsemblPlants" id="AT1G01790.2">
    <property type="protein sequence ID" value="AT1G01790.2"/>
    <property type="gene ID" value="AT1G01790"/>
</dbReference>
<dbReference type="GeneID" id="837332"/>
<dbReference type="Gramene" id="AT1G01790.1">
    <property type="protein sequence ID" value="AT1G01790.1"/>
    <property type="gene ID" value="AT1G01790"/>
</dbReference>
<dbReference type="Gramene" id="AT1G01790.2">
    <property type="protein sequence ID" value="AT1G01790.2"/>
    <property type="gene ID" value="AT1G01790"/>
</dbReference>
<dbReference type="KEGG" id="ath:AT1G01790"/>
<dbReference type="Araport" id="AT1G01790"/>
<dbReference type="TAIR" id="AT1G01790">
    <property type="gene designation" value="KEA1"/>
</dbReference>
<dbReference type="eggNOG" id="KOG1650">
    <property type="taxonomic scope" value="Eukaryota"/>
</dbReference>
<dbReference type="HOGENOM" id="CLU_005126_3_0_1"/>
<dbReference type="InParanoid" id="Q9ZTZ7"/>
<dbReference type="OMA" id="NVEANVH"/>
<dbReference type="PhylomeDB" id="Q9ZTZ7"/>
<dbReference type="PRO" id="PR:Q9ZTZ7"/>
<dbReference type="Proteomes" id="UP000006548">
    <property type="component" value="Chromosome 1"/>
</dbReference>
<dbReference type="ExpressionAtlas" id="Q9ZTZ7">
    <property type="expression patterns" value="baseline and differential"/>
</dbReference>
<dbReference type="GO" id="GO:0009507">
    <property type="term" value="C:chloroplast"/>
    <property type="evidence" value="ECO:0000314"/>
    <property type="project" value="TAIR"/>
</dbReference>
<dbReference type="GO" id="GO:0009941">
    <property type="term" value="C:chloroplast envelope"/>
    <property type="evidence" value="ECO:0007005"/>
    <property type="project" value="TAIR"/>
</dbReference>
<dbReference type="GO" id="GO:0009706">
    <property type="term" value="C:chloroplast inner membrane"/>
    <property type="evidence" value="ECO:0007669"/>
    <property type="project" value="UniProtKB-SubCell"/>
</dbReference>
<dbReference type="GO" id="GO:0031969">
    <property type="term" value="C:chloroplast membrane"/>
    <property type="evidence" value="ECO:0000314"/>
    <property type="project" value="TAIR"/>
</dbReference>
<dbReference type="GO" id="GO:0005576">
    <property type="term" value="C:extracellular region"/>
    <property type="evidence" value="ECO:0007005"/>
    <property type="project" value="TAIR"/>
</dbReference>
<dbReference type="GO" id="GO:0016020">
    <property type="term" value="C:membrane"/>
    <property type="evidence" value="ECO:0007005"/>
    <property type="project" value="TAIR"/>
</dbReference>
<dbReference type="GO" id="GO:0015079">
    <property type="term" value="F:potassium ion transmembrane transporter activity"/>
    <property type="evidence" value="ECO:0000314"/>
    <property type="project" value="UniProtKB"/>
</dbReference>
<dbReference type="GO" id="GO:0015386">
    <property type="term" value="F:potassium:proton antiporter activity"/>
    <property type="evidence" value="ECO:0000314"/>
    <property type="project" value="UniProtKB"/>
</dbReference>
<dbReference type="GO" id="GO:0015078">
    <property type="term" value="F:proton transmembrane transporter activity"/>
    <property type="evidence" value="ECO:0000314"/>
    <property type="project" value="UniProtKB"/>
</dbReference>
<dbReference type="GO" id="GO:0009738">
    <property type="term" value="P:abscisic acid-activated signaling pathway"/>
    <property type="evidence" value="ECO:0007669"/>
    <property type="project" value="UniProtKB-KW"/>
</dbReference>
<dbReference type="GO" id="GO:0019722">
    <property type="term" value="P:calcium-mediated signaling"/>
    <property type="evidence" value="ECO:0000315"/>
    <property type="project" value="UniProtKB"/>
</dbReference>
<dbReference type="GO" id="GO:0009658">
    <property type="term" value="P:chloroplast organization"/>
    <property type="evidence" value="ECO:0000316"/>
    <property type="project" value="TAIR"/>
</dbReference>
<dbReference type="GO" id="GO:0140899">
    <property type="term" value="P:plastid gene expression"/>
    <property type="evidence" value="ECO:0000315"/>
    <property type="project" value="UniProtKB"/>
</dbReference>
<dbReference type="GO" id="GO:0042794">
    <property type="term" value="P:plastid rRNA transcription"/>
    <property type="evidence" value="ECO:0000315"/>
    <property type="project" value="UniProtKB"/>
</dbReference>
<dbReference type="GO" id="GO:0006813">
    <property type="term" value="P:potassium ion transport"/>
    <property type="evidence" value="ECO:0000314"/>
    <property type="project" value="UniProtKB"/>
</dbReference>
<dbReference type="GO" id="GO:0080022">
    <property type="term" value="P:primary root development"/>
    <property type="evidence" value="ECO:0000315"/>
    <property type="project" value="UniProtKB"/>
</dbReference>
<dbReference type="GO" id="GO:2001057">
    <property type="term" value="P:reactive nitrogen species metabolic process"/>
    <property type="evidence" value="ECO:0000315"/>
    <property type="project" value="UniProtKB"/>
</dbReference>
<dbReference type="GO" id="GO:1900069">
    <property type="term" value="P:regulation of cellular hyperosmotic salinity response"/>
    <property type="evidence" value="ECO:0000315"/>
    <property type="project" value="UniProtKB"/>
</dbReference>
<dbReference type="GO" id="GO:0006885">
    <property type="term" value="P:regulation of pH"/>
    <property type="evidence" value="ECO:0000315"/>
    <property type="project" value="UniProtKB"/>
</dbReference>
<dbReference type="GO" id="GO:0010109">
    <property type="term" value="P:regulation of photosynthesis"/>
    <property type="evidence" value="ECO:0000315"/>
    <property type="project" value="UniProtKB"/>
</dbReference>
<dbReference type="GO" id="GO:2000377">
    <property type="term" value="P:regulation of reactive oxygen species metabolic process"/>
    <property type="evidence" value="ECO:0000315"/>
    <property type="project" value="UniProtKB"/>
</dbReference>
<dbReference type="GO" id="GO:2000070">
    <property type="term" value="P:regulation of response to water deprivation"/>
    <property type="evidence" value="ECO:0000315"/>
    <property type="project" value="UniProtKB"/>
</dbReference>
<dbReference type="GO" id="GO:1900140">
    <property type="term" value="P:regulation of seedling development"/>
    <property type="evidence" value="ECO:0000315"/>
    <property type="project" value="UniProtKB"/>
</dbReference>
<dbReference type="GO" id="GO:0009737">
    <property type="term" value="P:response to abscisic acid"/>
    <property type="evidence" value="ECO:0000315"/>
    <property type="project" value="UniProtKB"/>
</dbReference>
<dbReference type="GO" id="GO:0009646">
    <property type="term" value="P:response to absence of light"/>
    <property type="evidence" value="ECO:0000315"/>
    <property type="project" value="UniProtKB"/>
</dbReference>
<dbReference type="GO" id="GO:0009744">
    <property type="term" value="P:response to sucrose"/>
    <property type="evidence" value="ECO:0000315"/>
    <property type="project" value="UniProtKB"/>
</dbReference>
<dbReference type="FunFam" id="1.20.1530.20:FF:000007">
    <property type="entry name" value="K(+) efflux antiporter 2 chloroplastic"/>
    <property type="match status" value="1"/>
</dbReference>
<dbReference type="FunFam" id="3.40.50.720:FF:000134">
    <property type="entry name" value="K(+) efflux antiporter 2 chloroplastic"/>
    <property type="match status" value="1"/>
</dbReference>
<dbReference type="Gene3D" id="1.20.1530.20">
    <property type="match status" value="1"/>
</dbReference>
<dbReference type="Gene3D" id="3.40.50.720">
    <property type="entry name" value="NAD(P)-binding Rossmann-like Domain"/>
    <property type="match status" value="1"/>
</dbReference>
<dbReference type="InterPro" id="IPR006153">
    <property type="entry name" value="Cation/H_exchanger_TM"/>
</dbReference>
<dbReference type="InterPro" id="IPR004771">
    <property type="entry name" value="K/H_exchanger"/>
</dbReference>
<dbReference type="InterPro" id="IPR038770">
    <property type="entry name" value="Na+/solute_symporter_sf"/>
</dbReference>
<dbReference type="InterPro" id="IPR036291">
    <property type="entry name" value="NAD(P)-bd_dom_sf"/>
</dbReference>
<dbReference type="InterPro" id="IPR003148">
    <property type="entry name" value="RCK_N"/>
</dbReference>
<dbReference type="NCBIfam" id="TIGR00932">
    <property type="entry name" value="2a37"/>
    <property type="match status" value="1"/>
</dbReference>
<dbReference type="PANTHER" id="PTHR46157:SF2">
    <property type="entry name" value="K(+) EFFLUX ANTIPORTER 1, CHLOROPLASTIC-RELATED"/>
    <property type="match status" value="1"/>
</dbReference>
<dbReference type="PANTHER" id="PTHR46157">
    <property type="entry name" value="K(+) EFFLUX ANTIPORTER 3, CHLOROPLASTIC"/>
    <property type="match status" value="1"/>
</dbReference>
<dbReference type="Pfam" id="PF00999">
    <property type="entry name" value="Na_H_Exchanger"/>
    <property type="match status" value="1"/>
</dbReference>
<dbReference type="Pfam" id="PF02254">
    <property type="entry name" value="TrkA_N"/>
    <property type="match status" value="1"/>
</dbReference>
<dbReference type="SUPFAM" id="SSF51735">
    <property type="entry name" value="NAD(P)-binding Rossmann-fold domains"/>
    <property type="match status" value="1"/>
</dbReference>
<dbReference type="PROSITE" id="PS51201">
    <property type="entry name" value="RCK_N"/>
    <property type="match status" value="1"/>
</dbReference>
<feature type="transit peptide" description="Chloroplast" evidence="1">
    <location>
        <begin position="1"/>
        <end position="49"/>
    </location>
</feature>
<feature type="chain" id="PRO_0000395097" description="K(+) efflux antiporter 1, chloroplastic">
    <location>
        <begin position="50"/>
        <end position="1193"/>
    </location>
</feature>
<feature type="topological domain" description="Stromal" evidence="20">
    <location>
        <begin position="50"/>
        <end position="585"/>
    </location>
</feature>
<feature type="transmembrane region" description="Helical; Name=1" evidence="1">
    <location>
        <begin position="586"/>
        <end position="606"/>
    </location>
</feature>
<feature type="topological domain" description="Chloroplast intermembrane" evidence="20">
    <location>
        <begin position="607"/>
        <end position="612"/>
    </location>
</feature>
<feature type="transmembrane region" description="Helical; Name=2" evidence="1">
    <location>
        <begin position="613"/>
        <end position="633"/>
    </location>
</feature>
<feature type="topological domain" description="Stromal" evidence="20">
    <location>
        <begin position="634"/>
        <end position="640"/>
    </location>
</feature>
<feature type="transmembrane region" description="Helical; Name=3" evidence="1">
    <location>
        <begin position="641"/>
        <end position="661"/>
    </location>
</feature>
<feature type="topological domain" description="Chloroplast intermembrane" evidence="20">
    <location>
        <begin position="662"/>
        <end position="668"/>
    </location>
</feature>
<feature type="transmembrane region" description="Helical; Name=4" evidence="1">
    <location>
        <begin position="669"/>
        <end position="689"/>
    </location>
</feature>
<feature type="topological domain" description="Stromal" evidence="20">
    <location>
        <begin position="690"/>
        <end position="698"/>
    </location>
</feature>
<feature type="transmembrane region" description="Helical; Name=5" evidence="1">
    <location>
        <begin position="699"/>
        <end position="719"/>
    </location>
</feature>
<feature type="topological domain" description="Chloroplast intermembrane" evidence="20">
    <location>
        <begin position="720"/>
        <end position="733"/>
    </location>
</feature>
<feature type="transmembrane region" description="Helical; Name=6" evidence="1">
    <location>
        <begin position="734"/>
        <end position="754"/>
    </location>
</feature>
<feature type="topological domain" description="Stromal" evidence="20">
    <location>
        <begin position="755"/>
        <end position="766"/>
    </location>
</feature>
<feature type="transmembrane region" description="Helical; Name=7" evidence="1">
    <location>
        <begin position="767"/>
        <end position="787"/>
    </location>
</feature>
<feature type="topological domain" description="Chloroplast intermembrane" evidence="20">
    <location>
        <begin position="788"/>
        <end position="827"/>
    </location>
</feature>
<feature type="transmembrane region" description="Helical; Name=8" evidence="1">
    <location>
        <begin position="828"/>
        <end position="848"/>
    </location>
</feature>
<feature type="topological domain" description="Stromal" evidence="20">
    <location>
        <begin position="849"/>
        <end position="860"/>
    </location>
</feature>
<feature type="transmembrane region" description="Helical; Name=9" evidence="1">
    <location>
        <begin position="861"/>
        <end position="881"/>
    </location>
</feature>
<feature type="topological domain" description="Chloroplast intermembrane" evidence="20">
    <location>
        <begin position="882"/>
        <end position="883"/>
    </location>
</feature>
<feature type="transmembrane region" description="Helical; Name=10" evidence="1">
    <location>
        <begin position="884"/>
        <end position="904"/>
    </location>
</feature>
<feature type="topological domain" description="Stromal" evidence="20">
    <location>
        <begin position="905"/>
        <end position="912"/>
    </location>
</feature>
<feature type="transmembrane region" description="Helical; Name=11" evidence="1">
    <location>
        <begin position="913"/>
        <end position="933"/>
    </location>
</feature>
<feature type="topological domain" description="Chloroplast intermembrane" evidence="20">
    <location>
        <begin position="934"/>
        <end position="948"/>
    </location>
</feature>
<feature type="transmembrane region" description="Helical; Name=12" evidence="1">
    <location>
        <begin position="949"/>
        <end position="969"/>
    </location>
</feature>
<feature type="topological domain" description="Stromal" evidence="20">
    <location>
        <begin position="970"/>
        <end position="1193"/>
    </location>
</feature>
<feature type="domain" description="RCK N-terminal" evidence="2">
    <location>
        <begin position="995"/>
        <end position="1112"/>
    </location>
</feature>
<feature type="region of interest" description="Disordered" evidence="3">
    <location>
        <begin position="103"/>
        <end position="135"/>
    </location>
</feature>
<feature type="region of interest" description="Disordered" evidence="3">
    <location>
        <begin position="351"/>
        <end position="372"/>
    </location>
</feature>
<feature type="region of interest" description="Disordered" evidence="3">
    <location>
        <begin position="421"/>
        <end position="474"/>
    </location>
</feature>
<feature type="region of interest" description="Disordered" evidence="3">
    <location>
        <begin position="1165"/>
        <end position="1184"/>
    </location>
</feature>
<feature type="coiled-coil region" evidence="1">
    <location>
        <begin position="131"/>
        <end position="355"/>
    </location>
</feature>
<feature type="compositionally biased region" description="Polar residues" evidence="3">
    <location>
        <begin position="351"/>
        <end position="364"/>
    </location>
</feature>
<feature type="compositionally biased region" description="Basic and acidic residues" evidence="3">
    <location>
        <begin position="439"/>
        <end position="465"/>
    </location>
</feature>
<feature type="modified residue" description="N6-acetyllysine; by NSI" evidence="10">
    <location>
        <position position="168"/>
    </location>
</feature>
<feature type="sequence conflict" description="In Ref. 3; AAD01191." evidence="19" ref="3">
    <original>F</original>
    <variation>L</variation>
    <location>
        <position position="649"/>
    </location>
</feature>
<feature type="sequence conflict" description="In Ref. 3; AAD01191." evidence="19" ref="3">
    <original>F</original>
    <variation>Y</variation>
    <location>
        <position position="1021"/>
    </location>
</feature>
<gene>
    <name evidence="17 18" type="primary">KEA1</name>
    <name evidence="21" type="ordered locus">At1g01790</name>
    <name evidence="22 23" type="ORF">T1N6.20/T1N6.21</name>
</gene>
<protein>
    <recommendedName>
        <fullName evidence="17">K(+) efflux antiporter 1, chloroplastic</fullName>
        <shortName evidence="17">AtKEA1</shortName>
    </recommendedName>
</protein>
<organism>
    <name type="scientific">Arabidopsis thaliana</name>
    <name type="common">Mouse-ear cress</name>
    <dbReference type="NCBI Taxonomy" id="3702"/>
    <lineage>
        <taxon>Eukaryota</taxon>
        <taxon>Viridiplantae</taxon>
        <taxon>Streptophyta</taxon>
        <taxon>Embryophyta</taxon>
        <taxon>Tracheophyta</taxon>
        <taxon>Spermatophyta</taxon>
        <taxon>Magnoliopsida</taxon>
        <taxon>eudicotyledons</taxon>
        <taxon>Gunneridae</taxon>
        <taxon>Pentapetalae</taxon>
        <taxon>rosids</taxon>
        <taxon>malvids</taxon>
        <taxon>Brassicales</taxon>
        <taxon>Brassicaceae</taxon>
        <taxon>Camelineae</taxon>
        <taxon>Arabidopsis</taxon>
    </lineage>
</organism>
<reference key="1">
    <citation type="journal article" date="2000" name="Nature">
        <title>Sequence and analysis of chromosome 1 of the plant Arabidopsis thaliana.</title>
        <authorList>
            <person name="Theologis A."/>
            <person name="Ecker J.R."/>
            <person name="Palm C.J."/>
            <person name="Federspiel N.A."/>
            <person name="Kaul S."/>
            <person name="White O."/>
            <person name="Alonso J."/>
            <person name="Altafi H."/>
            <person name="Araujo R."/>
            <person name="Bowman C.L."/>
            <person name="Brooks S.Y."/>
            <person name="Buehler E."/>
            <person name="Chan A."/>
            <person name="Chao Q."/>
            <person name="Chen H."/>
            <person name="Cheuk R.F."/>
            <person name="Chin C.W."/>
            <person name="Chung M.K."/>
            <person name="Conn L."/>
            <person name="Conway A.B."/>
            <person name="Conway A.R."/>
            <person name="Creasy T.H."/>
            <person name="Dewar K."/>
            <person name="Dunn P."/>
            <person name="Etgu P."/>
            <person name="Feldblyum T.V."/>
            <person name="Feng J.-D."/>
            <person name="Fong B."/>
            <person name="Fujii C.Y."/>
            <person name="Gill J.E."/>
            <person name="Goldsmith A.D."/>
            <person name="Haas B."/>
            <person name="Hansen N.F."/>
            <person name="Hughes B."/>
            <person name="Huizar L."/>
            <person name="Hunter J.L."/>
            <person name="Jenkins J."/>
            <person name="Johnson-Hopson C."/>
            <person name="Khan S."/>
            <person name="Khaykin E."/>
            <person name="Kim C.J."/>
            <person name="Koo H.L."/>
            <person name="Kremenetskaia I."/>
            <person name="Kurtz D.B."/>
            <person name="Kwan A."/>
            <person name="Lam B."/>
            <person name="Langin-Hooper S."/>
            <person name="Lee A."/>
            <person name="Lee J.M."/>
            <person name="Lenz C.A."/>
            <person name="Li J.H."/>
            <person name="Li Y.-P."/>
            <person name="Lin X."/>
            <person name="Liu S.X."/>
            <person name="Liu Z.A."/>
            <person name="Luros J.S."/>
            <person name="Maiti R."/>
            <person name="Marziali A."/>
            <person name="Militscher J."/>
            <person name="Miranda M."/>
            <person name="Nguyen M."/>
            <person name="Nierman W.C."/>
            <person name="Osborne B.I."/>
            <person name="Pai G."/>
            <person name="Peterson J."/>
            <person name="Pham P.K."/>
            <person name="Rizzo M."/>
            <person name="Rooney T."/>
            <person name="Rowley D."/>
            <person name="Sakano H."/>
            <person name="Salzberg S.L."/>
            <person name="Schwartz J.R."/>
            <person name="Shinn P."/>
            <person name="Southwick A.M."/>
            <person name="Sun H."/>
            <person name="Tallon L.J."/>
            <person name="Tambunga G."/>
            <person name="Toriumi M.J."/>
            <person name="Town C.D."/>
            <person name="Utterback T."/>
            <person name="Van Aken S."/>
            <person name="Vaysberg M."/>
            <person name="Vysotskaia V.S."/>
            <person name="Walker M."/>
            <person name="Wu D."/>
            <person name="Yu G."/>
            <person name="Fraser C.M."/>
            <person name="Venter J.C."/>
            <person name="Davis R.W."/>
        </authorList>
    </citation>
    <scope>NUCLEOTIDE SEQUENCE [LARGE SCALE GENOMIC DNA]</scope>
    <source>
        <strain>cv. Columbia</strain>
    </source>
</reference>
<reference key="2">
    <citation type="journal article" date="2017" name="Plant J.">
        <title>Araport11: a complete reannotation of the Arabidopsis thaliana reference genome.</title>
        <authorList>
            <person name="Cheng C.Y."/>
            <person name="Krishnakumar V."/>
            <person name="Chan A.P."/>
            <person name="Thibaud-Nissen F."/>
            <person name="Schobel S."/>
            <person name="Town C.D."/>
        </authorList>
    </citation>
    <scope>GENOME REANNOTATION</scope>
    <source>
        <strain>cv. Columbia</strain>
    </source>
</reference>
<reference key="3">
    <citation type="submission" date="1997-05" db="EMBL/GenBank/DDBJ databases">
        <title>KEA1, K efflux antiporter from Arabidopsis thaliana.</title>
        <authorList>
            <person name="Yao W."/>
            <person name="Hadjeb N."/>
            <person name="Berkowitz G.A."/>
        </authorList>
    </citation>
    <scope>NUCLEOTIDE SEQUENCE [MRNA] OF 474-1193</scope>
</reference>
<reference key="4">
    <citation type="journal article" date="2001" name="Plant Physiol.">
        <title>Phylogenetic relationships within cation transporter families of Arabidopsis.</title>
        <authorList>
            <person name="Maeser P."/>
            <person name="Thomine S."/>
            <person name="Schroeder J.I."/>
            <person name="Ward J.M."/>
            <person name="Hirschi K."/>
            <person name="Sze H."/>
            <person name="Talke I.N."/>
            <person name="Amtmann A."/>
            <person name="Maathuis F.J.M."/>
            <person name="Sanders D."/>
            <person name="Harper J.F."/>
            <person name="Tchieu J."/>
            <person name="Gribskov M."/>
            <person name="Persans M.W."/>
            <person name="Salt D.E."/>
            <person name="Kim S.A."/>
            <person name="Guerinot M.L."/>
        </authorList>
    </citation>
    <scope>GENE FAMILY</scope>
    <scope>NOMENCLATURE</scope>
</reference>
<reference key="5">
    <citation type="journal article" date="2003" name="Mol. Cell. Proteomics">
        <title>Proteomics of the chloroplast envelope membranes from Arabidopsis thaliana.</title>
        <authorList>
            <person name="Ferro M."/>
            <person name="Salvi D."/>
            <person name="Brugiere S."/>
            <person name="Miras S."/>
            <person name="Kowalski S."/>
            <person name="Louwagie M."/>
            <person name="Garin J."/>
            <person name="Joyard J."/>
            <person name="Rolland N."/>
        </authorList>
    </citation>
    <scope>IDENTIFICATION BY MASS SPECTROMETRY</scope>
    <scope>SUBCELLULAR LOCATION [LARGE SCALE ANALYSIS]</scope>
    <source>
        <strain>cv. Wassilewskija</strain>
    </source>
</reference>
<reference key="6">
    <citation type="journal article" date="2008" name="PLoS ONE">
        <title>Sorting signals, N-terminal modifications and abundance of the chloroplast proteome.</title>
        <authorList>
            <person name="Zybailov B."/>
            <person name="Rutschow H."/>
            <person name="Friso G."/>
            <person name="Rudella A."/>
            <person name="Emanuelsson O."/>
            <person name="Sun Q."/>
            <person name="van Wijk K.J."/>
        </authorList>
    </citation>
    <scope>IDENTIFICATION BY MASS SPECTROMETRY</scope>
    <scope>SUBCELLULAR LOCATION [LARGE SCALE ANALYSIS]</scope>
</reference>
<reference key="7">
    <citation type="journal article" date="2009" name="Plant Physiol.">
        <title>Large-scale Arabidopsis phosphoproteome profiling reveals novel chloroplast kinase substrates and phosphorylation networks.</title>
        <authorList>
            <person name="Reiland S."/>
            <person name="Messerli G."/>
            <person name="Baerenfaller K."/>
            <person name="Gerrits B."/>
            <person name="Endler A."/>
            <person name="Grossmann J."/>
            <person name="Gruissem W."/>
            <person name="Baginsky S."/>
        </authorList>
    </citation>
    <scope>IDENTIFICATION BY MASS SPECTROMETRY [LARGE SCALE ANALYSIS]</scope>
</reference>
<reference key="8">
    <citation type="journal article" date="2013" name="PLoS ONE">
        <title>A novel AtKEA gene family, homolog of bacterial K+/H+ antiporters, plays potential roles in K+ homeostasis and osmotic adjustment in Arabidopsis.</title>
        <authorList>
            <person name="Zheng S."/>
            <person name="Pan T."/>
            <person name="Fan L."/>
            <person name="Qiu Q.S."/>
        </authorList>
    </citation>
    <scope>FUNCTION</scope>
    <scope>GENE FAMILY</scope>
    <scope>TISSUE SPECIFICITY</scope>
    <scope>INDUCTION</scope>
    <scope>TRANSPORTER ACTIVITY</scope>
    <scope>BIOPHYSICOCHEMICAL PROPERTIES</scope>
</reference>
<reference key="9">
    <citation type="journal article" date="2014" name="Proc. Natl. Acad. Sci. U.S.A.">
        <title>Plastidial transporters KEA1, -2, and -3 are essential for chloroplast osmoregulation, integrity, and pH regulation in Arabidopsis.</title>
        <authorList>
            <person name="Kunz H.H."/>
            <person name="Gierth M."/>
            <person name="Herdean A."/>
            <person name="Satoh-Cruz M."/>
            <person name="Kramer D.M."/>
            <person name="Spetea C."/>
            <person name="Schroeder J.I."/>
        </authorList>
    </citation>
    <scope>DISRUPTION PHENOTYPE</scope>
    <scope>SUBCELLULAR LOCATION</scope>
</reference>
<reference key="10">
    <citation type="journal article" date="2016" name="Plant Physiol.">
        <title>Envelope K+/H+ antiporters AtKEA1 and AtKEA2 function in plastid development.</title>
        <authorList>
            <person name="Aranda-Sicilia M.N."/>
            <person name="Aboukila A."/>
            <person name="Armbruster U."/>
            <person name="Cagnac O."/>
            <person name="Schumann T."/>
            <person name="Kunz H.-H."/>
            <person name="Jahns P."/>
            <person name="Rodriguez-Rosales M.P."/>
            <person name="Sze H."/>
            <person name="Venema K."/>
        </authorList>
    </citation>
    <scope>FUNCTION</scope>
    <scope>DISRUPTION PHENOTYPE</scope>
    <scope>TISSUE SPECIFICITY</scope>
    <scope>SUBCELLULAR LOCATION</scope>
    <source>
        <strain>cv. Columbia</strain>
    </source>
</reference>
<reference key="11">
    <citation type="journal article" date="2016" name="Proc. Natl. Acad. Sci. U.S.A.">
        <title>Rapid hyperosmotic-induced Ca2+ responses in Arabidopsis thaliana exhibit sensory potentiation and involvement of plastidial KEA transporters.</title>
        <authorList>
            <person name="Stephan A.B."/>
            <person name="Kunz H.-H."/>
            <person name="Yang E."/>
            <person name="Schroeder J.I."/>
        </authorList>
    </citation>
    <scope>FUNCTION</scope>
    <scope>DISRUPTION PHENOTYPE</scope>
    <source>
        <strain>cv. Columbia</strain>
    </source>
</reference>
<reference key="12">
    <citation type="journal article" date="2018" name="Plant Cell">
        <title>Chloroplast acetyltransferase NSI is required for state transitions in Arabidopsis thaliana.</title>
        <authorList>
            <person name="Koskela M.M."/>
            <person name="Bruenje A."/>
            <person name="Ivanauskaite A."/>
            <person name="Grabsztunowicz M."/>
            <person name="Lassowskat I."/>
            <person name="Neumann U."/>
            <person name="Dinh T.V."/>
            <person name="Sindlinger J."/>
            <person name="Schwarzer D."/>
            <person name="Wirtz M."/>
            <person name="Tyystjaervi E."/>
            <person name="Finkemeier I."/>
            <person name="Mulo P."/>
        </authorList>
    </citation>
    <scope>ACETYLATION AT LYS-168</scope>
    <scope>IDENTIFICATION BY MASS SPECTROMETRY</scope>
    <source>
        <strain>cv. Columbia</strain>
    </source>
</reference>
<reference key="13">
    <citation type="journal article" date="2019" name="Sci. Rep.">
        <title>Evidence for potassium transport activity of Arabidopsis KEA1-KEA6.</title>
        <authorList>
            <person name="Tsujii M."/>
            <person name="Kera K."/>
            <person name="Hamamoto S."/>
            <person name="Kuromori T."/>
            <person name="Shikanai T."/>
            <person name="Uozumi N."/>
        </authorList>
    </citation>
    <scope>FUNCTION</scope>
    <scope>TRANSPORTER ACTIVITY</scope>
    <scope>GENE FAMILY</scope>
    <scope>NOMENCLATURE</scope>
    <source>
        <strain>cv. Columbia</strain>
    </source>
</reference>
<reference key="14">
    <citation type="journal article" date="2020" name="Photosyn. Res.">
        <title>The topology of plastid inner envelope potassium cation efflux antiporter KEA1 provides new insights into its regulatory features.</title>
        <authorList>
            <person name="Boelter B."/>
            <person name="Mitterreiter M.J."/>
            <person name="Schwenkert S."/>
            <person name="Finkemeier I."/>
            <person name="Kunz H.-H."/>
        </authorList>
    </citation>
    <scope>ACETYLATION</scope>
    <scope>TOPOLOGY</scope>
    <source>
        <strain>cv. Columbia</strain>
    </source>
</reference>
<reference key="15">
    <citation type="journal article" date="2021" name="New Phytol.">
        <title>Plastidial transporters KEA1 and KEA2 at the inner envelope membrane adjust stromal pH in the dark.</title>
        <authorList>
            <person name="Aranda Sicilia M.N."/>
            <person name="Sanchez Romero M.E."/>
            <person name="Rodriguez Rosales M.P."/>
            <person name="Venema K."/>
        </authorList>
    </citation>
    <scope>FUNCTION</scope>
    <scope>DISRUPTION PHENOTYPE</scope>
    <scope>CATALYTIC ACTIVITY</scope>
    <scope>ACTIVITY REGULATION</scope>
    <source>
        <strain>cv. Columbia</strain>
    </source>
</reference>
<reference key="16">
    <citation type="journal article" date="2021" name="Plant Cell">
        <title>Loss of inner-envelope K+/H+ exchangers impairs plastid rRNA maturation and gene expression.</title>
        <authorList>
            <person name="DeTar R.A."/>
            <person name="Barahimipour R."/>
            <person name="Manavski N."/>
            <person name="Schwenkert S."/>
            <person name="Hoehner R."/>
            <person name="Boelter B."/>
            <person name="Inaba T."/>
            <person name="Meurer J."/>
            <person name="Zoschke R."/>
            <person name="Kunz H.-H."/>
        </authorList>
    </citation>
    <scope>FUNCTION</scope>
    <scope>DISRUPTION PHENOTYPE</scope>
    <source>
        <strain>cv. Columbia</strain>
    </source>
</reference>
<reference key="17">
    <citation type="journal article" date="2021" name="Plant Physiol. Biochem.">
        <title>Loss of function of the chloroplast membrane K+/H+ antiporters AtKEA1 and AtKEA2 alters the ROS and NO metabolism but promotes drought stress resilience.</title>
        <authorList>
            <person name="Sanchez-McSweeney A."/>
            <person name="Gonzalez-Gordo S."/>
            <person name="Aranda-Sicilia M.N."/>
            <person name="Rodriguez-Rosales M.P."/>
            <person name="Venema K."/>
            <person name="Palma J.M."/>
            <person name="Corpas F.J."/>
        </authorList>
    </citation>
    <scope>FUNCTION</scope>
    <scope>DISRUPTION PHENOTYPE</scope>
    <source>
        <strain>cv. Columbia</strain>
    </source>
</reference>
<reference key="18">
    <citation type="journal article" date="2022" name="Plant Sci.">
        <title>Exogenous sucrose influences KEA1 and KEA2 to regulate abscisic acid-mediated primary root growth in Arabidopsis.</title>
        <authorList>
            <person name="Zheng S."/>
            <person name="Su M."/>
            <person name="Shi Z."/>
            <person name="Gao H."/>
            <person name="Ma C."/>
            <person name="Zhu S."/>
            <person name="Zhang L."/>
            <person name="Wu G."/>
            <person name="Wu W."/>
            <person name="Wang J."/>
            <person name="Zhang J."/>
            <person name="Zhang T."/>
        </authorList>
    </citation>
    <scope>FUNCTION</scope>
    <scope>DISRUPTION PHENOTYPE</scope>
    <scope>TISSUE SPECIFICITY</scope>
    <source>
        <strain>cv. Columbia</strain>
    </source>
</reference>
<evidence type="ECO:0000255" key="1"/>
<evidence type="ECO:0000255" key="2">
    <source>
        <dbReference type="PROSITE-ProRule" id="PRU00543"/>
    </source>
</evidence>
<evidence type="ECO:0000256" key="3">
    <source>
        <dbReference type="SAM" id="MobiDB-lite"/>
    </source>
</evidence>
<evidence type="ECO:0000269" key="4">
    <source>
    </source>
</evidence>
<evidence type="ECO:0000269" key="5">
    <source>
    </source>
</evidence>
<evidence type="ECO:0000269" key="6">
    <source>
    </source>
</evidence>
<evidence type="ECO:0000269" key="7">
    <source>
    </source>
</evidence>
<evidence type="ECO:0000269" key="8">
    <source>
    </source>
</evidence>
<evidence type="ECO:0000269" key="9">
    <source>
    </source>
</evidence>
<evidence type="ECO:0000269" key="10">
    <source>
    </source>
</evidence>
<evidence type="ECO:0000269" key="11">
    <source>
    </source>
</evidence>
<evidence type="ECO:0000269" key="12">
    <source>
    </source>
</evidence>
<evidence type="ECO:0000269" key="13">
    <source>
    </source>
</evidence>
<evidence type="ECO:0000269" key="14">
    <source>
    </source>
</evidence>
<evidence type="ECO:0000269" key="15">
    <source>
    </source>
</evidence>
<evidence type="ECO:0000269" key="16">
    <source>
    </source>
</evidence>
<evidence type="ECO:0000303" key="17">
    <source>
    </source>
</evidence>
<evidence type="ECO:0000303" key="18">
    <source>
    </source>
</evidence>
<evidence type="ECO:0000305" key="19"/>
<evidence type="ECO:0000305" key="20">
    <source>
    </source>
</evidence>
<evidence type="ECO:0000312" key="21">
    <source>
        <dbReference type="Araport" id="AT1G01790"/>
    </source>
</evidence>
<evidence type="ECO:0000312" key="22">
    <source>
        <dbReference type="EMBL" id="AAF78418.1"/>
    </source>
</evidence>
<evidence type="ECO:0000312" key="23">
    <source>
        <dbReference type="EMBL" id="AAF78419.1"/>
    </source>
</evidence>